<gene>
    <name evidence="4" type="primary">CG1</name>
    <name evidence="7" type="ordered locus">At1g75340</name>
    <name evidence="8" type="ORF">F1B16.12</name>
</gene>
<organism>
    <name type="scientific">Arabidopsis thaliana</name>
    <name type="common">Mouse-ear cress</name>
    <dbReference type="NCBI Taxonomy" id="3702"/>
    <lineage>
        <taxon>Eukaryota</taxon>
        <taxon>Viridiplantae</taxon>
        <taxon>Streptophyta</taxon>
        <taxon>Embryophyta</taxon>
        <taxon>Tracheophyta</taxon>
        <taxon>Spermatophyta</taxon>
        <taxon>Magnoliopsida</taxon>
        <taxon>eudicotyledons</taxon>
        <taxon>Gunneridae</taxon>
        <taxon>Pentapetalae</taxon>
        <taxon>rosids</taxon>
        <taxon>malvids</taxon>
        <taxon>Brassicales</taxon>
        <taxon>Brassicaceae</taxon>
        <taxon>Camelineae</taxon>
        <taxon>Arabidopsis</taxon>
    </lineage>
</organism>
<sequence length="435" mass="46798">MRKELCRNFQRGSCRYGENCRFLHPQQAKPNNPFGFGTQNQQQQQQQQQQNSSNPFGFGVQSGGSSRPNQFQNTWSRTASTPTGGGAAASTQQTGKQTQPADHKCTDPAACKRVMQDDFKNERPMWKLTCYGHWKYFPCDVTGDISYEELRAVAYEEAKRGIPLQSIVERERNLQNSKIAEFENFLRNPYKGSVTANQSPFAATTPSIFPQSSQINSPSPAFSGFNQQTAFSNTNAGGLSSSGPPNAFASFNQQTTFPNTNAGGVSSSGPPNPFASFTQQSNNQQTAFSNTNAGGLSSSGPPNAFASFNKQPNAFSVNTPQPVPSGPSGFQTNPSTTFKPASFGPGPGFATTPQNNNIFGQSTPTPATNTSQNNQTAFNFNVPVASFTAPAINTTNTSSGTELQIGGDPVDSSIWLKEKWNPGEIPEQAPPDAFV</sequence>
<comment type="subunit">
    <text evidence="6">Part of the nuclear pore complex (NPC). The NPC has an eight-fold symmetrical structure comprising a central transport channel and two rings, the cytoplasmic and nuclear rings, to which eight filaments are attached. The cytoplasmic filaments have loose ends, while the nuclear filaments are joined in a distal ring, forming a nuclear basket. NPCs are highly dynamic in configuration and composition, and can be devided in 3 subcomplexes, the NUP62 subcomplex, the NUP107-160 subcomplex and the NUP93 subcomplex, containing approximately 30 different nucleoporin proteins.</text>
</comment>
<comment type="interaction">
    <interactant intactId="EBI-25527280">
        <id>Q9FWS3</id>
    </interactant>
    <interactant intactId="EBI-3133404">
        <id>Q9XFM0</id>
        <label>IAA28</label>
    </interactant>
    <organismsDiffer>false</organismsDiffer>
    <experiments>3</experiments>
</comment>
<comment type="subcellular location">
    <subcellularLocation>
        <location evidence="3">Nucleus envelope</location>
    </subcellularLocation>
    <subcellularLocation>
        <location evidence="6">Nucleus</location>
        <location evidence="6">Nuclear pore complex</location>
    </subcellularLocation>
</comment>
<comment type="alternative products">
    <event type="alternative splicing"/>
    <isoform>
        <id>Q9FWS3-1</id>
        <name>1</name>
        <sequence type="displayed"/>
    </isoform>
    <isoform>
        <id>Q9FWS3-2</id>
        <name>2</name>
        <sequence type="described" ref="VSP_057130 VSP_057131"/>
    </isoform>
</comment>
<comment type="domain">
    <text evidence="5">Contains FG repeats mediating the translocation through the NPC by interacting with transport factors.</text>
</comment>
<comment type="miscellaneous">
    <molecule>Isoform 2</molecule>
    <text evidence="5">Derived from proteomic data.</text>
</comment>
<comment type="sequence caution" evidence="5">
    <conflict type="erroneous gene model prediction">
        <sequence resource="EMBL-CDS" id="AAG13074"/>
    </conflict>
</comment>
<comment type="sequence caution" evidence="5">
    <conflict type="erroneous initiation">
        <sequence resource="EMBL-CDS" id="AAK59780"/>
    </conflict>
    <text>Truncated N-terminus.</text>
</comment>
<reference key="1">
    <citation type="journal article" date="2000" name="Nature">
        <title>Sequence and analysis of chromosome 1 of the plant Arabidopsis thaliana.</title>
        <authorList>
            <person name="Theologis A."/>
            <person name="Ecker J.R."/>
            <person name="Palm C.J."/>
            <person name="Federspiel N.A."/>
            <person name="Kaul S."/>
            <person name="White O."/>
            <person name="Alonso J."/>
            <person name="Altafi H."/>
            <person name="Araujo R."/>
            <person name="Bowman C.L."/>
            <person name="Brooks S.Y."/>
            <person name="Buehler E."/>
            <person name="Chan A."/>
            <person name="Chao Q."/>
            <person name="Chen H."/>
            <person name="Cheuk R.F."/>
            <person name="Chin C.W."/>
            <person name="Chung M.K."/>
            <person name="Conn L."/>
            <person name="Conway A.B."/>
            <person name="Conway A.R."/>
            <person name="Creasy T.H."/>
            <person name="Dewar K."/>
            <person name="Dunn P."/>
            <person name="Etgu P."/>
            <person name="Feldblyum T.V."/>
            <person name="Feng J.-D."/>
            <person name="Fong B."/>
            <person name="Fujii C.Y."/>
            <person name="Gill J.E."/>
            <person name="Goldsmith A.D."/>
            <person name="Haas B."/>
            <person name="Hansen N.F."/>
            <person name="Hughes B."/>
            <person name="Huizar L."/>
            <person name="Hunter J.L."/>
            <person name="Jenkins J."/>
            <person name="Johnson-Hopson C."/>
            <person name="Khan S."/>
            <person name="Khaykin E."/>
            <person name="Kim C.J."/>
            <person name="Koo H.L."/>
            <person name="Kremenetskaia I."/>
            <person name="Kurtz D.B."/>
            <person name="Kwan A."/>
            <person name="Lam B."/>
            <person name="Langin-Hooper S."/>
            <person name="Lee A."/>
            <person name="Lee J.M."/>
            <person name="Lenz C.A."/>
            <person name="Li J.H."/>
            <person name="Li Y.-P."/>
            <person name="Lin X."/>
            <person name="Liu S.X."/>
            <person name="Liu Z.A."/>
            <person name="Luros J.S."/>
            <person name="Maiti R."/>
            <person name="Marziali A."/>
            <person name="Militscher J."/>
            <person name="Miranda M."/>
            <person name="Nguyen M."/>
            <person name="Nierman W.C."/>
            <person name="Osborne B.I."/>
            <person name="Pai G."/>
            <person name="Peterson J."/>
            <person name="Pham P.K."/>
            <person name="Rizzo M."/>
            <person name="Rooney T."/>
            <person name="Rowley D."/>
            <person name="Sakano H."/>
            <person name="Salzberg S.L."/>
            <person name="Schwartz J.R."/>
            <person name="Shinn P."/>
            <person name="Southwick A.M."/>
            <person name="Sun H."/>
            <person name="Tallon L.J."/>
            <person name="Tambunga G."/>
            <person name="Toriumi M.J."/>
            <person name="Town C.D."/>
            <person name="Utterback T."/>
            <person name="Van Aken S."/>
            <person name="Vaysberg M."/>
            <person name="Vysotskaia V.S."/>
            <person name="Walker M."/>
            <person name="Wu D."/>
            <person name="Yu G."/>
            <person name="Fraser C.M."/>
            <person name="Venter J.C."/>
            <person name="Davis R.W."/>
        </authorList>
    </citation>
    <scope>NUCLEOTIDE SEQUENCE [LARGE SCALE GENOMIC DNA]</scope>
    <source>
        <strain>cv. Columbia</strain>
    </source>
</reference>
<reference key="2">
    <citation type="journal article" date="2017" name="Plant J.">
        <title>Araport11: a complete reannotation of the Arabidopsis thaliana reference genome.</title>
        <authorList>
            <person name="Cheng C.Y."/>
            <person name="Krishnakumar V."/>
            <person name="Chan A.P."/>
            <person name="Thibaud-Nissen F."/>
            <person name="Schobel S."/>
            <person name="Town C.D."/>
        </authorList>
    </citation>
    <scope>GENOME REANNOTATION</scope>
    <source>
        <strain>cv. Columbia</strain>
    </source>
</reference>
<reference key="3">
    <citation type="journal article" date="2003" name="Science">
        <title>Empirical analysis of transcriptional activity in the Arabidopsis genome.</title>
        <authorList>
            <person name="Yamada K."/>
            <person name="Lim J."/>
            <person name="Dale J.M."/>
            <person name="Chen H."/>
            <person name="Shinn P."/>
            <person name="Palm C.J."/>
            <person name="Southwick A.M."/>
            <person name="Wu H.C."/>
            <person name="Kim C.J."/>
            <person name="Nguyen M."/>
            <person name="Pham P.K."/>
            <person name="Cheuk R.F."/>
            <person name="Karlin-Newmann G."/>
            <person name="Liu S.X."/>
            <person name="Lam B."/>
            <person name="Sakano H."/>
            <person name="Wu T."/>
            <person name="Yu G."/>
            <person name="Miranda M."/>
            <person name="Quach H.L."/>
            <person name="Tripp M."/>
            <person name="Chang C.H."/>
            <person name="Lee J.M."/>
            <person name="Toriumi M.J."/>
            <person name="Chan M.M."/>
            <person name="Tang C.C."/>
            <person name="Onodera C.S."/>
            <person name="Deng J.M."/>
            <person name="Akiyama K."/>
            <person name="Ansari Y."/>
            <person name="Arakawa T."/>
            <person name="Banh J."/>
            <person name="Banno F."/>
            <person name="Bowser L."/>
            <person name="Brooks S.Y."/>
            <person name="Carninci P."/>
            <person name="Chao Q."/>
            <person name="Choy N."/>
            <person name="Enju A."/>
            <person name="Goldsmith A.D."/>
            <person name="Gurjal M."/>
            <person name="Hansen N.F."/>
            <person name="Hayashizaki Y."/>
            <person name="Johnson-Hopson C."/>
            <person name="Hsuan V.W."/>
            <person name="Iida K."/>
            <person name="Karnes M."/>
            <person name="Khan S."/>
            <person name="Koesema E."/>
            <person name="Ishida J."/>
            <person name="Jiang P.X."/>
            <person name="Jones T."/>
            <person name="Kawai J."/>
            <person name="Kamiya A."/>
            <person name="Meyers C."/>
            <person name="Nakajima M."/>
            <person name="Narusaka M."/>
            <person name="Seki M."/>
            <person name="Sakurai T."/>
            <person name="Satou M."/>
            <person name="Tamse R."/>
            <person name="Vaysberg M."/>
            <person name="Wallender E.K."/>
            <person name="Wong C."/>
            <person name="Yamamura Y."/>
            <person name="Yuan S."/>
            <person name="Shinozaki K."/>
            <person name="Davis R.W."/>
            <person name="Theologis A."/>
            <person name="Ecker J.R."/>
        </authorList>
    </citation>
    <scope>NUCLEOTIDE SEQUENCE [LARGE SCALE MRNA] OF 43-435</scope>
    <source>
        <strain>cv. Columbia</strain>
    </source>
</reference>
<reference key="4">
    <citation type="journal article" date="2008" name="BMC Genomics">
        <title>Genome-wide analysis of CCCH zinc finger family in Arabidopsis and rice.</title>
        <authorList>
            <person name="Wang D."/>
            <person name="Guo Y."/>
            <person name="Wu C."/>
            <person name="Yang G."/>
            <person name="Li Y."/>
            <person name="Zheng C."/>
        </authorList>
    </citation>
    <scope>NOMENCLATURE</scope>
</reference>
<reference key="5">
    <citation type="journal article" date="2010" name="Plant Cell">
        <title>Identification and characterization of nuclear pore complex components in Arabidopsis thaliana.</title>
        <authorList>
            <person name="Tamura K."/>
            <person name="Fukao Y."/>
            <person name="Iwamoto M."/>
            <person name="Haraguchi T."/>
            <person name="Hara-Nishimura I."/>
        </authorList>
    </citation>
    <scope>IDENTIFICATION IN THE NUCLEAR PORE COMPLEX BY MASS SPECTROMETRY</scope>
    <scope>SUBCELLULAR LOCATION</scope>
</reference>
<evidence type="ECO:0000255" key="1">
    <source>
        <dbReference type="PROSITE-ProRule" id="PRU00723"/>
    </source>
</evidence>
<evidence type="ECO:0000256" key="2">
    <source>
        <dbReference type="SAM" id="MobiDB-lite"/>
    </source>
</evidence>
<evidence type="ECO:0000269" key="3">
    <source>
    </source>
</evidence>
<evidence type="ECO:0000303" key="4">
    <source>
    </source>
</evidence>
<evidence type="ECO:0000305" key="5"/>
<evidence type="ECO:0000305" key="6">
    <source>
    </source>
</evidence>
<evidence type="ECO:0000312" key="7">
    <source>
        <dbReference type="Araport" id="AT1G75340"/>
    </source>
</evidence>
<evidence type="ECO:0000312" key="8">
    <source>
        <dbReference type="EMBL" id="AAG13074.1"/>
    </source>
</evidence>
<accession>Q9FWS3</accession>
<accession>F4HZ22</accession>
<accession>Q94C30</accession>
<keyword id="KW-0025">Alternative splicing</keyword>
<keyword id="KW-0238">DNA-binding</keyword>
<keyword id="KW-0479">Metal-binding</keyword>
<keyword id="KW-0509">mRNA transport</keyword>
<keyword id="KW-0906">Nuclear pore complex</keyword>
<keyword id="KW-0539">Nucleus</keyword>
<keyword id="KW-0653">Protein transport</keyword>
<keyword id="KW-1185">Reference proteome</keyword>
<keyword id="KW-0677">Repeat</keyword>
<keyword id="KW-0811">Translocation</keyword>
<keyword id="KW-0813">Transport</keyword>
<keyword id="KW-0862">Zinc</keyword>
<keyword id="KW-0863">Zinc-finger</keyword>
<dbReference type="EMBL" id="AC023754">
    <property type="protein sequence ID" value="AAG13074.1"/>
    <property type="status" value="ALT_SEQ"/>
    <property type="molecule type" value="Genomic_DNA"/>
</dbReference>
<dbReference type="EMBL" id="CP002684">
    <property type="protein sequence ID" value="AEE35703.1"/>
    <property type="molecule type" value="Genomic_DNA"/>
</dbReference>
<dbReference type="EMBL" id="CP002684">
    <property type="protein sequence ID" value="AEE35704.1"/>
    <property type="molecule type" value="Genomic_DNA"/>
</dbReference>
<dbReference type="EMBL" id="AY037195">
    <property type="protein sequence ID" value="AAK59780.1"/>
    <property type="status" value="ALT_INIT"/>
    <property type="molecule type" value="mRNA"/>
</dbReference>
<dbReference type="EMBL" id="BT004555">
    <property type="protein sequence ID" value="AAO42801.1"/>
    <property type="molecule type" value="mRNA"/>
</dbReference>
<dbReference type="PIR" id="H96783">
    <property type="entry name" value="H96783"/>
</dbReference>
<dbReference type="RefSeq" id="NP_001185401.1">
    <molecule id="Q9FWS3-2"/>
    <property type="nucleotide sequence ID" value="NM_001198472.1"/>
</dbReference>
<dbReference type="RefSeq" id="NP_565108.2">
    <molecule id="Q9FWS3-1"/>
    <property type="nucleotide sequence ID" value="NM_106188.3"/>
</dbReference>
<dbReference type="SMR" id="Q9FWS3"/>
<dbReference type="BioGRID" id="29089">
    <property type="interactions" value="25"/>
</dbReference>
<dbReference type="FunCoup" id="Q9FWS3">
    <property type="interactions" value="1665"/>
</dbReference>
<dbReference type="IntAct" id="Q9FWS3">
    <property type="interactions" value="2"/>
</dbReference>
<dbReference type="STRING" id="3702.Q9FWS3"/>
<dbReference type="GlyGen" id="Q9FWS3">
    <property type="glycosylation" value="1 site"/>
</dbReference>
<dbReference type="PaxDb" id="3702-AT1G75340.1"/>
<dbReference type="DNASU" id="843870"/>
<dbReference type="EnsemblPlants" id="AT1G75340.1">
    <molecule id="Q9FWS3-1"/>
    <property type="protein sequence ID" value="AT1G75340.1"/>
    <property type="gene ID" value="AT1G75340"/>
</dbReference>
<dbReference type="EnsemblPlants" id="AT1G75340.2">
    <molecule id="Q9FWS3-2"/>
    <property type="protein sequence ID" value="AT1G75340.2"/>
    <property type="gene ID" value="AT1G75340"/>
</dbReference>
<dbReference type="GeneID" id="843870"/>
<dbReference type="Gramene" id="AT1G75340.1">
    <molecule id="Q9FWS3-1"/>
    <property type="protein sequence ID" value="AT1G75340.1"/>
    <property type="gene ID" value="AT1G75340"/>
</dbReference>
<dbReference type="Gramene" id="AT1G75340.2">
    <molecule id="Q9FWS3-2"/>
    <property type="protein sequence ID" value="AT1G75340.2"/>
    <property type="gene ID" value="AT1G75340"/>
</dbReference>
<dbReference type="KEGG" id="ath:AT1G75340"/>
<dbReference type="Araport" id="AT1G75340"/>
<dbReference type="TAIR" id="AT1G75340"/>
<dbReference type="eggNOG" id="ENOG502QVMW">
    <property type="taxonomic scope" value="Eukaryota"/>
</dbReference>
<dbReference type="InParanoid" id="Q9FWS3"/>
<dbReference type="OMA" id="IWILTCY"/>
<dbReference type="PhylomeDB" id="Q9FWS3"/>
<dbReference type="PRO" id="PR:Q9FWS3"/>
<dbReference type="Proteomes" id="UP000006548">
    <property type="component" value="Chromosome 1"/>
</dbReference>
<dbReference type="ExpressionAtlas" id="Q9FWS3">
    <property type="expression patterns" value="baseline and differential"/>
</dbReference>
<dbReference type="GO" id="GO:0005635">
    <property type="term" value="C:nuclear envelope"/>
    <property type="evidence" value="ECO:0000314"/>
    <property type="project" value="TAIR"/>
</dbReference>
<dbReference type="GO" id="GO:0005643">
    <property type="term" value="C:nuclear pore"/>
    <property type="evidence" value="ECO:0007669"/>
    <property type="project" value="UniProtKB-SubCell"/>
</dbReference>
<dbReference type="GO" id="GO:0003677">
    <property type="term" value="F:DNA binding"/>
    <property type="evidence" value="ECO:0007669"/>
    <property type="project" value="UniProtKB-KW"/>
</dbReference>
<dbReference type="GO" id="GO:0008270">
    <property type="term" value="F:zinc ion binding"/>
    <property type="evidence" value="ECO:0007669"/>
    <property type="project" value="UniProtKB-KW"/>
</dbReference>
<dbReference type="GO" id="GO:0051028">
    <property type="term" value="P:mRNA transport"/>
    <property type="evidence" value="ECO:0007669"/>
    <property type="project" value="UniProtKB-KW"/>
</dbReference>
<dbReference type="GO" id="GO:0015031">
    <property type="term" value="P:protein transport"/>
    <property type="evidence" value="ECO:0007669"/>
    <property type="project" value="UniProtKB-KW"/>
</dbReference>
<dbReference type="Gene3D" id="4.10.1000.10">
    <property type="entry name" value="Zinc finger, CCCH-type"/>
    <property type="match status" value="1"/>
</dbReference>
<dbReference type="InterPro" id="IPR051767">
    <property type="entry name" value="Nucleoporin_NUP42"/>
</dbReference>
<dbReference type="InterPro" id="IPR041367">
    <property type="entry name" value="Znf-CCCH_4"/>
</dbReference>
<dbReference type="InterPro" id="IPR000571">
    <property type="entry name" value="Znf_CCCH"/>
</dbReference>
<dbReference type="InterPro" id="IPR036855">
    <property type="entry name" value="Znf_CCCH_sf"/>
</dbReference>
<dbReference type="PANTHER" id="PTHR46527:SF1">
    <property type="entry name" value="NUCLEOPORIN NUP42"/>
    <property type="match status" value="1"/>
</dbReference>
<dbReference type="PANTHER" id="PTHR46527">
    <property type="entry name" value="NUCLEOPORIN-LIKE PROTEIN 2"/>
    <property type="match status" value="1"/>
</dbReference>
<dbReference type="Pfam" id="PF18044">
    <property type="entry name" value="zf-CCCH_4"/>
    <property type="match status" value="1"/>
</dbReference>
<dbReference type="SMART" id="SM00356">
    <property type="entry name" value="ZnF_C3H1"/>
    <property type="match status" value="1"/>
</dbReference>
<dbReference type="SUPFAM" id="SSF90229">
    <property type="entry name" value="CCCH zinc finger"/>
    <property type="match status" value="1"/>
</dbReference>
<dbReference type="PROSITE" id="PS50103">
    <property type="entry name" value="ZF_C3H1"/>
    <property type="match status" value="1"/>
</dbReference>
<name>C3H16_ARATH</name>
<protein>
    <recommendedName>
        <fullName>Zinc finger CCCH domain-containing protein 16</fullName>
        <shortName>AtC3H16</shortName>
    </recommendedName>
</protein>
<proteinExistence type="evidence at protein level"/>
<feature type="chain" id="PRO_0000371975" description="Zinc finger CCCH domain-containing protein 16">
    <location>
        <begin position="1"/>
        <end position="435"/>
    </location>
</feature>
<feature type="repeat" description="1">
    <location>
        <begin position="34"/>
        <end position="35"/>
    </location>
</feature>
<feature type="repeat" description="2">
    <location>
        <begin position="36"/>
        <end position="37"/>
    </location>
</feature>
<feature type="repeat" description="3">
    <location>
        <begin position="56"/>
        <end position="57"/>
    </location>
</feature>
<feature type="repeat" description="4">
    <location>
        <begin position="58"/>
        <end position="59"/>
    </location>
</feature>
<feature type="repeat" description="5">
    <location>
        <begin position="343"/>
        <end position="344"/>
    </location>
</feature>
<feature type="repeat" description="6">
    <location>
        <begin position="359"/>
        <end position="360"/>
    </location>
</feature>
<feature type="zinc finger region" description="C3H1-type" evidence="1">
    <location>
        <begin position="1"/>
        <end position="27"/>
    </location>
</feature>
<feature type="region of interest" description="6 X 2 AA repeats of F-G">
    <location>
        <begin position="2"/>
        <end position="88"/>
    </location>
</feature>
<feature type="region of interest" description="Disordered" evidence="2">
    <location>
        <begin position="25"/>
        <end position="105"/>
    </location>
</feature>
<feature type="region of interest" description="Disordered" evidence="2">
    <location>
        <begin position="205"/>
        <end position="374"/>
    </location>
</feature>
<feature type="compositionally biased region" description="Low complexity" evidence="2">
    <location>
        <begin position="39"/>
        <end position="51"/>
    </location>
</feature>
<feature type="compositionally biased region" description="Polar residues" evidence="2">
    <location>
        <begin position="63"/>
        <end position="77"/>
    </location>
</feature>
<feature type="compositionally biased region" description="Low complexity" evidence="2">
    <location>
        <begin position="78"/>
        <end position="99"/>
    </location>
</feature>
<feature type="compositionally biased region" description="Polar residues" evidence="2">
    <location>
        <begin position="205"/>
        <end position="320"/>
    </location>
</feature>
<feature type="compositionally biased region" description="Polar residues" evidence="2">
    <location>
        <begin position="328"/>
        <end position="339"/>
    </location>
</feature>
<feature type="compositionally biased region" description="Polar residues" evidence="2">
    <location>
        <begin position="351"/>
        <end position="374"/>
    </location>
</feature>
<feature type="splice variant" id="VSP_057130" description="In isoform 2.">
    <original>S</original>
    <variation>SLGFVFYILGFNLKSIDVRRC</variation>
    <location>
        <position position="13"/>
    </location>
</feature>
<feature type="splice variant" id="VSP_057131" description="In isoform 2.">
    <location>
        <begin position="226"/>
        <end position="282"/>
    </location>
</feature>